<comment type="subcellular location">
    <subcellularLocation>
        <location>Plastid</location>
        <location>Chloroplast</location>
    </subcellularLocation>
</comment>
<comment type="similarity">
    <text evidence="1">Belongs to the bacterial ribosomal protein bL33 family.</text>
</comment>
<sequence length="66" mass="7501">MARGKDARVTVILECTNCVRGGVTKESTGISRYITEKNRHNTPGQLELKKFCPYCYKQTIHGEIKK</sequence>
<dbReference type="EMBL" id="AJ271079">
    <property type="protein sequence ID" value="CAB67178.1"/>
    <property type="molecule type" value="Genomic_DNA"/>
</dbReference>
<dbReference type="RefSeq" id="NP_084713.1">
    <property type="nucleotide sequence ID" value="NC_002693.2"/>
</dbReference>
<dbReference type="GeneID" id="802818"/>
<dbReference type="GO" id="GO:0009507">
    <property type="term" value="C:chloroplast"/>
    <property type="evidence" value="ECO:0007669"/>
    <property type="project" value="UniProtKB-SubCell"/>
</dbReference>
<dbReference type="GO" id="GO:1990904">
    <property type="term" value="C:ribonucleoprotein complex"/>
    <property type="evidence" value="ECO:0007669"/>
    <property type="project" value="UniProtKB-KW"/>
</dbReference>
<dbReference type="GO" id="GO:0005840">
    <property type="term" value="C:ribosome"/>
    <property type="evidence" value="ECO:0007669"/>
    <property type="project" value="UniProtKB-KW"/>
</dbReference>
<dbReference type="GO" id="GO:0003735">
    <property type="term" value="F:structural constituent of ribosome"/>
    <property type="evidence" value="ECO:0007669"/>
    <property type="project" value="InterPro"/>
</dbReference>
<dbReference type="GO" id="GO:0006412">
    <property type="term" value="P:translation"/>
    <property type="evidence" value="ECO:0007669"/>
    <property type="project" value="UniProtKB-UniRule"/>
</dbReference>
<dbReference type="Gene3D" id="2.20.28.120">
    <property type="entry name" value="Ribosomal protein L33"/>
    <property type="match status" value="1"/>
</dbReference>
<dbReference type="HAMAP" id="MF_00294">
    <property type="entry name" value="Ribosomal_bL33"/>
    <property type="match status" value="1"/>
</dbReference>
<dbReference type="InterPro" id="IPR001705">
    <property type="entry name" value="Ribosomal_bL33"/>
</dbReference>
<dbReference type="InterPro" id="IPR018264">
    <property type="entry name" value="Ribosomal_bL33_CS"/>
</dbReference>
<dbReference type="InterPro" id="IPR038584">
    <property type="entry name" value="Ribosomal_bL33_sf"/>
</dbReference>
<dbReference type="InterPro" id="IPR011332">
    <property type="entry name" value="Ribosomal_zn-bd"/>
</dbReference>
<dbReference type="NCBIfam" id="NF001764">
    <property type="entry name" value="PRK00504.1"/>
    <property type="match status" value="1"/>
</dbReference>
<dbReference type="NCBIfam" id="NF001860">
    <property type="entry name" value="PRK00595.1"/>
    <property type="match status" value="1"/>
</dbReference>
<dbReference type="NCBIfam" id="TIGR01023">
    <property type="entry name" value="rpmG_bact"/>
    <property type="match status" value="1"/>
</dbReference>
<dbReference type="PANTHER" id="PTHR43168">
    <property type="entry name" value="50S RIBOSOMAL PROTEIN L33, CHLOROPLASTIC"/>
    <property type="match status" value="1"/>
</dbReference>
<dbReference type="PANTHER" id="PTHR43168:SF2">
    <property type="entry name" value="LARGE RIBOSOMAL SUBUNIT PROTEIN BL33C"/>
    <property type="match status" value="1"/>
</dbReference>
<dbReference type="Pfam" id="PF00471">
    <property type="entry name" value="Ribosomal_L33"/>
    <property type="match status" value="1"/>
</dbReference>
<dbReference type="SUPFAM" id="SSF57829">
    <property type="entry name" value="Zn-binding ribosomal proteins"/>
    <property type="match status" value="1"/>
</dbReference>
<dbReference type="PROSITE" id="PS00582">
    <property type="entry name" value="RIBOSOMAL_L33"/>
    <property type="match status" value="1"/>
</dbReference>
<keyword id="KW-0150">Chloroplast</keyword>
<keyword id="KW-0934">Plastid</keyword>
<keyword id="KW-0687">Ribonucleoprotein</keyword>
<keyword id="KW-0689">Ribosomal protein</keyword>
<reference key="1">
    <citation type="journal article" date="2000" name="Mol. Gen. Genet.">
        <title>Complete nucleotide sequence of the Oenothera elata plastid chromosome, representing plastome I of the five distinguishable Euoenothera plastomes.</title>
        <authorList>
            <person name="Hupfer H."/>
            <person name="Swiatek M."/>
            <person name="Hornung S."/>
            <person name="Herrmann R.G."/>
            <person name="Maier R.M."/>
            <person name="Chiu W.-L."/>
            <person name="Sears B."/>
        </authorList>
    </citation>
    <scope>NUCLEOTIDE SEQUENCE [LARGE SCALE GENOMIC DNA]</scope>
    <source>
        <strain>cv. Johansen</strain>
    </source>
</reference>
<evidence type="ECO:0000305" key="1"/>
<protein>
    <recommendedName>
        <fullName evidence="1">Large ribosomal subunit protein bL33c</fullName>
    </recommendedName>
    <alternativeName>
        <fullName>50S ribosomal protein L33, chloroplastic</fullName>
    </alternativeName>
</protein>
<gene>
    <name type="primary">rpl33</name>
</gene>
<geneLocation type="chloroplast"/>
<name>RK33_OENEH</name>
<proteinExistence type="inferred from homology"/>
<accession>Q9MTK2</accession>
<feature type="chain" id="PRO_0000170291" description="Large ribosomal subunit protein bL33c">
    <location>
        <begin position="1"/>
        <end position="66"/>
    </location>
</feature>
<organism>
    <name type="scientific">Oenothera elata subsp. hookeri</name>
    <name type="common">Hooker's evening primrose</name>
    <name type="synonym">Oenothera hookeri</name>
    <dbReference type="NCBI Taxonomy" id="85636"/>
    <lineage>
        <taxon>Eukaryota</taxon>
        <taxon>Viridiplantae</taxon>
        <taxon>Streptophyta</taxon>
        <taxon>Embryophyta</taxon>
        <taxon>Tracheophyta</taxon>
        <taxon>Spermatophyta</taxon>
        <taxon>Magnoliopsida</taxon>
        <taxon>eudicotyledons</taxon>
        <taxon>Gunneridae</taxon>
        <taxon>Pentapetalae</taxon>
        <taxon>rosids</taxon>
        <taxon>malvids</taxon>
        <taxon>Myrtales</taxon>
        <taxon>Onagraceae</taxon>
        <taxon>Onagroideae</taxon>
        <taxon>Onagreae</taxon>
        <taxon>Oenothera</taxon>
    </lineage>
</organism>